<organism>
    <name type="scientific">Salinispora arenicola (strain CNS-205)</name>
    <dbReference type="NCBI Taxonomy" id="391037"/>
    <lineage>
        <taxon>Bacteria</taxon>
        <taxon>Bacillati</taxon>
        <taxon>Actinomycetota</taxon>
        <taxon>Actinomycetes</taxon>
        <taxon>Micromonosporales</taxon>
        <taxon>Micromonosporaceae</taxon>
        <taxon>Salinispora</taxon>
    </lineage>
</organism>
<proteinExistence type="inferred from homology"/>
<name>GSA_SALAI</name>
<comment type="catalytic activity">
    <reaction evidence="1">
        <text>(S)-4-amino-5-oxopentanoate = 5-aminolevulinate</text>
        <dbReference type="Rhea" id="RHEA:14265"/>
        <dbReference type="ChEBI" id="CHEBI:57501"/>
        <dbReference type="ChEBI" id="CHEBI:356416"/>
        <dbReference type="EC" id="5.4.3.8"/>
    </reaction>
</comment>
<comment type="cofactor">
    <cofactor evidence="1">
        <name>pyridoxal 5'-phosphate</name>
        <dbReference type="ChEBI" id="CHEBI:597326"/>
    </cofactor>
</comment>
<comment type="pathway">
    <text evidence="1">Porphyrin-containing compound metabolism; protoporphyrin-IX biosynthesis; 5-aminolevulinate from L-glutamyl-tRNA(Glu): step 2/2.</text>
</comment>
<comment type="subunit">
    <text evidence="1">Homodimer.</text>
</comment>
<comment type="subcellular location">
    <subcellularLocation>
        <location evidence="1">Cytoplasm</location>
    </subcellularLocation>
</comment>
<comment type="similarity">
    <text evidence="1">Belongs to the class-III pyridoxal-phosphate-dependent aminotransferase family. HemL subfamily.</text>
</comment>
<feature type="chain" id="PRO_0000382366" description="Glutamate-1-semialdehyde 2,1-aminomutase">
    <location>
        <begin position="1"/>
        <end position="444"/>
    </location>
</feature>
<feature type="modified residue" description="N6-(pyridoxal phosphate)lysine" evidence="1">
    <location>
        <position position="279"/>
    </location>
</feature>
<protein>
    <recommendedName>
        <fullName evidence="1">Glutamate-1-semialdehyde 2,1-aminomutase</fullName>
        <shortName evidence="1">GSA</shortName>
        <ecNumber evidence="1">5.4.3.8</ecNumber>
    </recommendedName>
    <alternativeName>
        <fullName evidence="1">Glutamate-1-semialdehyde aminotransferase</fullName>
        <shortName evidence="1">GSA-AT</shortName>
    </alternativeName>
</protein>
<gene>
    <name evidence="1" type="primary">hemL</name>
    <name type="ordered locus">Sare_4520</name>
</gene>
<keyword id="KW-0963">Cytoplasm</keyword>
<keyword id="KW-0413">Isomerase</keyword>
<keyword id="KW-0627">Porphyrin biosynthesis</keyword>
<keyword id="KW-0663">Pyridoxal phosphate</keyword>
<evidence type="ECO:0000255" key="1">
    <source>
        <dbReference type="HAMAP-Rule" id="MF_00375"/>
    </source>
</evidence>
<sequence>MTDVLPAGPGRYPAAAPASEALFARARALVPGGVNSPVRAFRAVGGTPRFMVRGEGPWLYDADGRRYVDLVCSWGPMILGHAHPAVVEALHSAAALGTSFGAPTPGEVELAAEIVDRTPVEQVRLVSSGTEATMSAIRLARGCTGRARIIKFAGCYHGHSDALLAAAGSGVATFGLPDSPGVTDAAAGDTIVLPYNDIQAVEAAFAAEGPQIAAIITEAAAGNMGVVAPRDDFNQRLAAIAHANGALLIVDEVMTGFRVSRAGWHGLDACPADLWTYGKVMGGGLPAAAFGGRAEIMAQLAPAGPVYQAGTLSGNPLACAAGLTTLRLADDALYRRLDDTAAVVGRLAGDALAAAGVPHRLSYAGNMFSIFFTDADVVDYASARTQQVPAFKAFFHAMLEAGVYLPPSAFESWFVSAAIDDTALEQIAAALPAAAAAAAAGHGG</sequence>
<accession>A8M6S5</accession>
<dbReference type="EC" id="5.4.3.8" evidence="1"/>
<dbReference type="EMBL" id="CP000850">
    <property type="protein sequence ID" value="ABW00293.1"/>
    <property type="molecule type" value="Genomic_DNA"/>
</dbReference>
<dbReference type="SMR" id="A8M6S5"/>
<dbReference type="STRING" id="391037.Sare_4520"/>
<dbReference type="KEGG" id="saq:Sare_4520"/>
<dbReference type="PATRIC" id="fig|391037.6.peg.4565"/>
<dbReference type="eggNOG" id="COG0001">
    <property type="taxonomic scope" value="Bacteria"/>
</dbReference>
<dbReference type="HOGENOM" id="CLU_016922_1_5_11"/>
<dbReference type="OrthoDB" id="9801052at2"/>
<dbReference type="UniPathway" id="UPA00251">
    <property type="reaction ID" value="UER00317"/>
</dbReference>
<dbReference type="GO" id="GO:0005737">
    <property type="term" value="C:cytoplasm"/>
    <property type="evidence" value="ECO:0007669"/>
    <property type="project" value="UniProtKB-SubCell"/>
</dbReference>
<dbReference type="GO" id="GO:0042286">
    <property type="term" value="F:glutamate-1-semialdehyde 2,1-aminomutase activity"/>
    <property type="evidence" value="ECO:0007669"/>
    <property type="project" value="UniProtKB-UniRule"/>
</dbReference>
<dbReference type="GO" id="GO:0030170">
    <property type="term" value="F:pyridoxal phosphate binding"/>
    <property type="evidence" value="ECO:0007669"/>
    <property type="project" value="InterPro"/>
</dbReference>
<dbReference type="GO" id="GO:0008483">
    <property type="term" value="F:transaminase activity"/>
    <property type="evidence" value="ECO:0007669"/>
    <property type="project" value="InterPro"/>
</dbReference>
<dbReference type="GO" id="GO:0006782">
    <property type="term" value="P:protoporphyrinogen IX biosynthetic process"/>
    <property type="evidence" value="ECO:0007669"/>
    <property type="project" value="UniProtKB-UniRule"/>
</dbReference>
<dbReference type="CDD" id="cd00610">
    <property type="entry name" value="OAT_like"/>
    <property type="match status" value="1"/>
</dbReference>
<dbReference type="FunFam" id="3.40.640.10:FF:000021">
    <property type="entry name" value="Glutamate-1-semialdehyde 2,1-aminomutase"/>
    <property type="match status" value="1"/>
</dbReference>
<dbReference type="Gene3D" id="3.90.1150.10">
    <property type="entry name" value="Aspartate Aminotransferase, domain 1"/>
    <property type="match status" value="1"/>
</dbReference>
<dbReference type="Gene3D" id="3.40.640.10">
    <property type="entry name" value="Type I PLP-dependent aspartate aminotransferase-like (Major domain)"/>
    <property type="match status" value="1"/>
</dbReference>
<dbReference type="HAMAP" id="MF_00375">
    <property type="entry name" value="HemL_aminotrans_3"/>
    <property type="match status" value="1"/>
</dbReference>
<dbReference type="InterPro" id="IPR004639">
    <property type="entry name" value="4pyrrol_synth_GluAld_NH2Trfase"/>
</dbReference>
<dbReference type="InterPro" id="IPR005814">
    <property type="entry name" value="Aminotrans_3"/>
</dbReference>
<dbReference type="InterPro" id="IPR015424">
    <property type="entry name" value="PyrdxlP-dep_Trfase"/>
</dbReference>
<dbReference type="InterPro" id="IPR015421">
    <property type="entry name" value="PyrdxlP-dep_Trfase_major"/>
</dbReference>
<dbReference type="InterPro" id="IPR015422">
    <property type="entry name" value="PyrdxlP-dep_Trfase_small"/>
</dbReference>
<dbReference type="NCBIfam" id="TIGR00713">
    <property type="entry name" value="hemL"/>
    <property type="match status" value="1"/>
</dbReference>
<dbReference type="NCBIfam" id="NF000818">
    <property type="entry name" value="PRK00062.1"/>
    <property type="match status" value="1"/>
</dbReference>
<dbReference type="PANTHER" id="PTHR43713">
    <property type="entry name" value="GLUTAMATE-1-SEMIALDEHYDE 2,1-AMINOMUTASE"/>
    <property type="match status" value="1"/>
</dbReference>
<dbReference type="PANTHER" id="PTHR43713:SF3">
    <property type="entry name" value="GLUTAMATE-1-SEMIALDEHYDE 2,1-AMINOMUTASE 1, CHLOROPLASTIC-RELATED"/>
    <property type="match status" value="1"/>
</dbReference>
<dbReference type="Pfam" id="PF00202">
    <property type="entry name" value="Aminotran_3"/>
    <property type="match status" value="1"/>
</dbReference>
<dbReference type="SUPFAM" id="SSF53383">
    <property type="entry name" value="PLP-dependent transferases"/>
    <property type="match status" value="1"/>
</dbReference>
<reference key="1">
    <citation type="submission" date="2007-10" db="EMBL/GenBank/DDBJ databases">
        <title>Complete sequence of Salinispora arenicola CNS-205.</title>
        <authorList>
            <consortium name="US DOE Joint Genome Institute"/>
            <person name="Copeland A."/>
            <person name="Lucas S."/>
            <person name="Lapidus A."/>
            <person name="Barry K."/>
            <person name="Glavina del Rio T."/>
            <person name="Dalin E."/>
            <person name="Tice H."/>
            <person name="Pitluck S."/>
            <person name="Foster B."/>
            <person name="Schmutz J."/>
            <person name="Larimer F."/>
            <person name="Land M."/>
            <person name="Hauser L."/>
            <person name="Kyrpides N."/>
            <person name="Ivanova N."/>
            <person name="Jensen P.R."/>
            <person name="Moore B.S."/>
            <person name="Penn K."/>
            <person name="Jenkins C."/>
            <person name="Udwary D."/>
            <person name="Xiang L."/>
            <person name="Gontang E."/>
            <person name="Richardson P."/>
        </authorList>
    </citation>
    <scope>NUCLEOTIDE SEQUENCE [LARGE SCALE GENOMIC DNA]</scope>
    <source>
        <strain>CNS-205</strain>
    </source>
</reference>